<reference key="1">
    <citation type="journal article" date="2010" name="BMC Genomics">
        <title>Complete genome sequence and lifestyle of black-pigmented Corynebacterium aurimucosum ATCC 700975 (formerly C. nigricans CN-1) isolated from a vaginal swab of a woman with spontaneous abortion.</title>
        <authorList>
            <person name="Trost E."/>
            <person name="Gotker S."/>
            <person name="Schneider J."/>
            <person name="Schneiker-Bekel S."/>
            <person name="Szczepanowski R."/>
            <person name="Tilker A."/>
            <person name="Viehoever P."/>
            <person name="Arnold W."/>
            <person name="Bekel T."/>
            <person name="Blom J."/>
            <person name="Gartemann K.H."/>
            <person name="Linke B."/>
            <person name="Goesmann A."/>
            <person name="Puhler A."/>
            <person name="Shukla S.K."/>
            <person name="Tauch A."/>
        </authorList>
    </citation>
    <scope>NUCLEOTIDE SEQUENCE [LARGE SCALE GENOMIC DNA]</scope>
    <source>
        <strain>ATCC 700975 / DSM 44827 / CIP 107346 / CN-1</strain>
    </source>
</reference>
<feature type="chain" id="PRO_1000184014" description="Large ribosomal subunit protein bL17">
    <location>
        <begin position="1"/>
        <end position="159"/>
    </location>
</feature>
<feature type="region of interest" description="Disordered" evidence="2">
    <location>
        <begin position="124"/>
        <end position="159"/>
    </location>
</feature>
<feature type="compositionally biased region" description="Low complexity" evidence="2">
    <location>
        <begin position="124"/>
        <end position="135"/>
    </location>
</feature>
<feature type="compositionally biased region" description="Acidic residues" evidence="2">
    <location>
        <begin position="145"/>
        <end position="159"/>
    </location>
</feature>
<dbReference type="EMBL" id="CP001601">
    <property type="protein sequence ID" value="ACP32043.1"/>
    <property type="molecule type" value="Genomic_DNA"/>
</dbReference>
<dbReference type="RefSeq" id="WP_010189522.1">
    <property type="nucleotide sequence ID" value="NC_012590.1"/>
</dbReference>
<dbReference type="SMR" id="C3PL39"/>
<dbReference type="STRING" id="548476.cauri_0446"/>
<dbReference type="GeneID" id="31923062"/>
<dbReference type="KEGG" id="car:cauri_0446"/>
<dbReference type="eggNOG" id="COG0203">
    <property type="taxonomic scope" value="Bacteria"/>
</dbReference>
<dbReference type="HOGENOM" id="CLU_074407_0_0_11"/>
<dbReference type="OrthoDB" id="9809073at2"/>
<dbReference type="Proteomes" id="UP000002077">
    <property type="component" value="Chromosome"/>
</dbReference>
<dbReference type="GO" id="GO:0022625">
    <property type="term" value="C:cytosolic large ribosomal subunit"/>
    <property type="evidence" value="ECO:0007669"/>
    <property type="project" value="TreeGrafter"/>
</dbReference>
<dbReference type="GO" id="GO:0003735">
    <property type="term" value="F:structural constituent of ribosome"/>
    <property type="evidence" value="ECO:0007669"/>
    <property type="project" value="InterPro"/>
</dbReference>
<dbReference type="GO" id="GO:0006412">
    <property type="term" value="P:translation"/>
    <property type="evidence" value="ECO:0007669"/>
    <property type="project" value="UniProtKB-UniRule"/>
</dbReference>
<dbReference type="FunFam" id="3.90.1030.10:FF:000001">
    <property type="entry name" value="50S ribosomal protein L17"/>
    <property type="match status" value="1"/>
</dbReference>
<dbReference type="Gene3D" id="3.90.1030.10">
    <property type="entry name" value="Ribosomal protein L17"/>
    <property type="match status" value="1"/>
</dbReference>
<dbReference type="HAMAP" id="MF_01368">
    <property type="entry name" value="Ribosomal_bL17"/>
    <property type="match status" value="1"/>
</dbReference>
<dbReference type="InterPro" id="IPR000456">
    <property type="entry name" value="Ribosomal_bL17"/>
</dbReference>
<dbReference type="InterPro" id="IPR047859">
    <property type="entry name" value="Ribosomal_bL17_CS"/>
</dbReference>
<dbReference type="InterPro" id="IPR036373">
    <property type="entry name" value="Ribosomal_bL17_sf"/>
</dbReference>
<dbReference type="NCBIfam" id="TIGR00059">
    <property type="entry name" value="L17"/>
    <property type="match status" value="1"/>
</dbReference>
<dbReference type="PANTHER" id="PTHR14413:SF16">
    <property type="entry name" value="LARGE RIBOSOMAL SUBUNIT PROTEIN BL17M"/>
    <property type="match status" value="1"/>
</dbReference>
<dbReference type="PANTHER" id="PTHR14413">
    <property type="entry name" value="RIBOSOMAL PROTEIN L17"/>
    <property type="match status" value="1"/>
</dbReference>
<dbReference type="Pfam" id="PF01196">
    <property type="entry name" value="Ribosomal_L17"/>
    <property type="match status" value="1"/>
</dbReference>
<dbReference type="SUPFAM" id="SSF64263">
    <property type="entry name" value="Prokaryotic ribosomal protein L17"/>
    <property type="match status" value="1"/>
</dbReference>
<dbReference type="PROSITE" id="PS01167">
    <property type="entry name" value="RIBOSOMAL_L17"/>
    <property type="match status" value="1"/>
</dbReference>
<sequence>MPTPKKGPRLGGSASQQKHLLSNMAASLIEHGAIKTTDAKAKVLRPYIEKIITKAKAGTVADRRAVLKLIPHKDVVAYLFDELAPKFENREGGYTRIIKLENRSGDNAPMSQISLVLEETVTSEANRATRAAASKQAEEAKAEEAEATEAEAEETTEEK</sequence>
<name>RL17_CORA7</name>
<organism>
    <name type="scientific">Corynebacterium aurimucosum (strain ATCC 700975 / DSM 44827 / CIP 107346 / CN-1)</name>
    <name type="common">Corynebacterium nigricans</name>
    <dbReference type="NCBI Taxonomy" id="548476"/>
    <lineage>
        <taxon>Bacteria</taxon>
        <taxon>Bacillati</taxon>
        <taxon>Actinomycetota</taxon>
        <taxon>Actinomycetes</taxon>
        <taxon>Mycobacteriales</taxon>
        <taxon>Corynebacteriaceae</taxon>
        <taxon>Corynebacterium</taxon>
    </lineage>
</organism>
<accession>C3PL39</accession>
<proteinExistence type="inferred from homology"/>
<gene>
    <name evidence="1" type="primary">rplQ</name>
    <name type="ordered locus">cauri_0446</name>
</gene>
<comment type="subunit">
    <text evidence="1">Part of the 50S ribosomal subunit. Contacts protein L32.</text>
</comment>
<comment type="similarity">
    <text evidence="1">Belongs to the bacterial ribosomal protein bL17 family.</text>
</comment>
<keyword id="KW-1185">Reference proteome</keyword>
<keyword id="KW-0687">Ribonucleoprotein</keyword>
<keyword id="KW-0689">Ribosomal protein</keyword>
<protein>
    <recommendedName>
        <fullName evidence="1">Large ribosomal subunit protein bL17</fullName>
    </recommendedName>
    <alternativeName>
        <fullName evidence="3">50S ribosomal protein L17</fullName>
    </alternativeName>
</protein>
<evidence type="ECO:0000255" key="1">
    <source>
        <dbReference type="HAMAP-Rule" id="MF_01368"/>
    </source>
</evidence>
<evidence type="ECO:0000256" key="2">
    <source>
        <dbReference type="SAM" id="MobiDB-lite"/>
    </source>
</evidence>
<evidence type="ECO:0000305" key="3"/>